<proteinExistence type="inferred from homology"/>
<evidence type="ECO:0000250" key="1"/>
<evidence type="ECO:0000255" key="2"/>
<evidence type="ECO:0000305" key="3"/>
<dbReference type="EMBL" id="AAFW02000044">
    <property type="protein sequence ID" value="EDN63224.1"/>
    <property type="molecule type" value="Genomic_DNA"/>
</dbReference>
<dbReference type="HOGENOM" id="CLU_039662_0_0_1"/>
<dbReference type="Proteomes" id="UP000007060">
    <property type="component" value="Unassembled WGS sequence"/>
</dbReference>
<dbReference type="GO" id="GO:0005576">
    <property type="term" value="C:extracellular region"/>
    <property type="evidence" value="ECO:0007669"/>
    <property type="project" value="UniProtKB-KW"/>
</dbReference>
<dbReference type="GO" id="GO:0009277">
    <property type="term" value="C:fungal-type cell wall"/>
    <property type="evidence" value="ECO:0007669"/>
    <property type="project" value="TreeGrafter"/>
</dbReference>
<dbReference type="GO" id="GO:0005199">
    <property type="term" value="F:structural constituent of cell wall"/>
    <property type="evidence" value="ECO:0007669"/>
    <property type="project" value="InterPro"/>
</dbReference>
<dbReference type="GO" id="GO:0031505">
    <property type="term" value="P:fungal-type cell wall organization"/>
    <property type="evidence" value="ECO:0007669"/>
    <property type="project" value="UniProtKB-ARBA"/>
</dbReference>
<dbReference type="InterPro" id="IPR054508">
    <property type="entry name" value="PIR1-like_C"/>
</dbReference>
<dbReference type="InterPro" id="IPR051153">
    <property type="entry name" value="Yeast_CWMannoprotein_PIR"/>
</dbReference>
<dbReference type="InterPro" id="IPR000420">
    <property type="entry name" value="Yeast_PIR_rpt"/>
</dbReference>
<dbReference type="PANTHER" id="PTHR47254">
    <property type="entry name" value="CELL WALL MANNOPROTEIN CIS3-RELATED"/>
    <property type="match status" value="1"/>
</dbReference>
<dbReference type="PANTHER" id="PTHR47254:SF1">
    <property type="entry name" value="CELL WALL MANNOPROTEIN CIS3-RELATED"/>
    <property type="match status" value="1"/>
</dbReference>
<dbReference type="Pfam" id="PF00399">
    <property type="entry name" value="PIR"/>
    <property type="match status" value="3"/>
</dbReference>
<dbReference type="Pfam" id="PF22799">
    <property type="entry name" value="PIR1-like_C"/>
    <property type="match status" value="1"/>
</dbReference>
<dbReference type="PROSITE" id="PS00929">
    <property type="entry name" value="PIR_REPEAT_1"/>
    <property type="match status" value="4"/>
</dbReference>
<dbReference type="PROSITE" id="PS50256">
    <property type="entry name" value="PIR_REPEAT_2"/>
    <property type="match status" value="4"/>
</dbReference>
<gene>
    <name type="primary">PIR5</name>
    <name type="ORF">SCY_3133</name>
</gene>
<sequence>MHYKKAFLASLLSSIALTAYAPPEPWATLTPSSKMDGGTTEYRTSFGLAVIPFTVTESKVKRNVISQINDGQVQVTTQKLPHPVSQIGDGQIQVTTQKVPPVVSHIVSQIGDGQLQITTAKNVVTKSTIAVPSKTVTATATSTATAVSQIHDGQVQVTISSASSSSVLSKSKLEPTKKPNNEKVIKVQACKSSGTLAITLQEGVLIDSSGRIGSIVANRQFQFDGPPPQAGAIYAGGWSITKHGTLAIGDNDVFYQCLSGTFYNLYDQSIGGQCNPVHLQTVGLVDC</sequence>
<name>PIR5_YEAS7</name>
<protein>
    <recommendedName>
        <fullName>Cell wall protein PIR5</fullName>
    </recommendedName>
    <alternativeName>
        <fullName>Protein with internal repeats 5</fullName>
    </alternativeName>
</protein>
<accession>A6ZQH2</accession>
<keyword id="KW-0134">Cell wall</keyword>
<keyword id="KW-0165">Cleavage on pair of basic residues</keyword>
<keyword id="KW-0677">Repeat</keyword>
<keyword id="KW-0964">Secreted</keyword>
<keyword id="KW-0732">Signal</keyword>
<reference key="1">
    <citation type="journal article" date="2007" name="Proc. Natl. Acad. Sci. U.S.A.">
        <title>Genome sequencing and comparative analysis of Saccharomyces cerevisiae strain YJM789.</title>
        <authorList>
            <person name="Wei W."/>
            <person name="McCusker J.H."/>
            <person name="Hyman R.W."/>
            <person name="Jones T."/>
            <person name="Ning Y."/>
            <person name="Cao Z."/>
            <person name="Gu Z."/>
            <person name="Bruno D."/>
            <person name="Miranda M."/>
            <person name="Nguyen M."/>
            <person name="Wilhelmy J."/>
            <person name="Komp C."/>
            <person name="Tamse R."/>
            <person name="Wang X."/>
            <person name="Jia P."/>
            <person name="Luedi P."/>
            <person name="Oefner P.J."/>
            <person name="David L."/>
            <person name="Dietrich F.S."/>
            <person name="Li Y."/>
            <person name="Davis R.W."/>
            <person name="Steinmetz L.M."/>
        </authorList>
    </citation>
    <scope>NUCLEOTIDE SEQUENCE [LARGE SCALE GENOMIC DNA]</scope>
    <source>
        <strain>YJM789</strain>
    </source>
</reference>
<comment type="function">
    <text evidence="1">Component of the outer cell wall layer. May be involved in meiosis and sporulation (By similarity).</text>
</comment>
<comment type="subcellular location">
    <subcellularLocation>
        <location evidence="1">Secreted</location>
        <location evidence="1">Cell wall</location>
    </subcellularLocation>
    <text evidence="1">Covalently attached to the cell wall.</text>
</comment>
<comment type="domain">
    <text evidence="1">The PIR1/2/3 repeats are required for the covalent linkage to the cell wall (By similarity). Their number varies among different strains of S.cerevisiae.</text>
</comment>
<comment type="PTM">
    <text evidence="1">Covalently linked to beta-1,3-glucan of the inner cell wall layer via an alkali-sensitive ester linkage between the gamma-carboxyl group of glutamic acids, arising from specific glutamines within the PIR1/2/3 repeats, and hydroxyl groups of glucoses of beta-1,3-glucan chains.</text>
</comment>
<comment type="similarity">
    <text evidence="3">Belongs to the PIR protein family.</text>
</comment>
<feature type="signal peptide" evidence="2">
    <location>
        <begin position="1"/>
        <end position="21"/>
    </location>
</feature>
<feature type="propeptide" id="PRO_0000377622" evidence="1">
    <location>
        <begin position="22"/>
        <end position="62"/>
    </location>
</feature>
<feature type="chain" id="PRO_0000377744" description="Cell wall protein PIR5">
    <location>
        <begin position="63"/>
        <end position="287"/>
    </location>
</feature>
<feature type="repeat" description="PIR1/2/3 1">
    <location>
        <begin position="62"/>
        <end position="80"/>
    </location>
</feature>
<feature type="repeat" description="PIR1/2/3 2">
    <location>
        <begin position="81"/>
        <end position="99"/>
    </location>
</feature>
<feature type="repeat" description="PIR1/2/3 3">
    <location>
        <begin position="104"/>
        <end position="122"/>
    </location>
</feature>
<feature type="repeat" description="PIR1/2/3 4">
    <location>
        <begin position="144"/>
        <end position="162"/>
    </location>
</feature>
<feature type="site" description="Cleavage; by KEX2" evidence="2">
    <location>
        <begin position="62"/>
        <end position="63"/>
    </location>
</feature>
<feature type="site" description="Covalent attachment to cell wall glycan" evidence="1">
    <location>
        <position position="72"/>
    </location>
</feature>
<feature type="site" description="Covalent attachment to cell wall glycan" evidence="1">
    <location>
        <position position="91"/>
    </location>
</feature>
<feature type="site" description="Covalent attachment to cell wall glycan" evidence="1">
    <location>
        <position position="114"/>
    </location>
</feature>
<feature type="site" description="Covalent attachment to cell wall glycan" evidence="1">
    <location>
        <position position="154"/>
    </location>
</feature>
<organism>
    <name type="scientific">Saccharomyces cerevisiae (strain YJM789)</name>
    <name type="common">Baker's yeast</name>
    <dbReference type="NCBI Taxonomy" id="307796"/>
    <lineage>
        <taxon>Eukaryota</taxon>
        <taxon>Fungi</taxon>
        <taxon>Dikarya</taxon>
        <taxon>Ascomycota</taxon>
        <taxon>Saccharomycotina</taxon>
        <taxon>Saccharomycetes</taxon>
        <taxon>Saccharomycetales</taxon>
        <taxon>Saccharomycetaceae</taxon>
        <taxon>Saccharomyces</taxon>
    </lineage>
</organism>